<organism>
    <name type="scientific">Buchnera aphidicola subsp. Baizongia pistaciae (strain Bp)</name>
    <dbReference type="NCBI Taxonomy" id="224915"/>
    <lineage>
        <taxon>Bacteria</taxon>
        <taxon>Pseudomonadati</taxon>
        <taxon>Pseudomonadota</taxon>
        <taxon>Gammaproteobacteria</taxon>
        <taxon>Enterobacterales</taxon>
        <taxon>Erwiniaceae</taxon>
        <taxon>Buchnera</taxon>
    </lineage>
</organism>
<accession>Q89AC6</accession>
<evidence type="ECO:0000255" key="1"/>
<evidence type="ECO:0000255" key="2">
    <source>
        <dbReference type="HAMAP-Rule" id="MF_02120"/>
    </source>
</evidence>
<name>DCDA_BUCBP</name>
<keyword id="KW-0028">Amino-acid biosynthesis</keyword>
<keyword id="KW-0210">Decarboxylase</keyword>
<keyword id="KW-0456">Lyase</keyword>
<keyword id="KW-0457">Lysine biosynthesis</keyword>
<keyword id="KW-0663">Pyridoxal phosphate</keyword>
<keyword id="KW-1185">Reference proteome</keyword>
<dbReference type="EC" id="4.1.1.20" evidence="2"/>
<dbReference type="EMBL" id="AE016826">
    <property type="protein sequence ID" value="AAO27100.1"/>
    <property type="molecule type" value="Genomic_DNA"/>
</dbReference>
<dbReference type="RefSeq" id="WP_011091501.1">
    <property type="nucleotide sequence ID" value="NC_004545.1"/>
</dbReference>
<dbReference type="SMR" id="Q89AC6"/>
<dbReference type="STRING" id="224915.bbp_388"/>
<dbReference type="KEGG" id="bab:bbp_388"/>
<dbReference type="eggNOG" id="COG0019">
    <property type="taxonomic scope" value="Bacteria"/>
</dbReference>
<dbReference type="HOGENOM" id="CLU_026444_0_2_6"/>
<dbReference type="OrthoDB" id="9802241at2"/>
<dbReference type="UniPathway" id="UPA00034">
    <property type="reaction ID" value="UER00027"/>
</dbReference>
<dbReference type="Proteomes" id="UP000000601">
    <property type="component" value="Chromosome"/>
</dbReference>
<dbReference type="GO" id="GO:0008836">
    <property type="term" value="F:diaminopimelate decarboxylase activity"/>
    <property type="evidence" value="ECO:0007669"/>
    <property type="project" value="UniProtKB-UniRule"/>
</dbReference>
<dbReference type="GO" id="GO:0030170">
    <property type="term" value="F:pyridoxal phosphate binding"/>
    <property type="evidence" value="ECO:0007669"/>
    <property type="project" value="UniProtKB-UniRule"/>
</dbReference>
<dbReference type="GO" id="GO:0009089">
    <property type="term" value="P:lysine biosynthetic process via diaminopimelate"/>
    <property type="evidence" value="ECO:0007669"/>
    <property type="project" value="UniProtKB-UniRule"/>
</dbReference>
<dbReference type="CDD" id="cd06828">
    <property type="entry name" value="PLPDE_III_DapDC"/>
    <property type="match status" value="1"/>
</dbReference>
<dbReference type="Gene3D" id="3.20.20.10">
    <property type="entry name" value="Alanine racemase"/>
    <property type="match status" value="1"/>
</dbReference>
<dbReference type="Gene3D" id="2.40.37.10">
    <property type="entry name" value="Lyase, Ornithine Decarboxylase, Chain A, domain 1"/>
    <property type="match status" value="1"/>
</dbReference>
<dbReference type="HAMAP" id="MF_02120">
    <property type="entry name" value="LysA"/>
    <property type="match status" value="1"/>
</dbReference>
<dbReference type="InterPro" id="IPR009006">
    <property type="entry name" value="Ala_racemase/Decarboxylase_C"/>
</dbReference>
<dbReference type="InterPro" id="IPR002986">
    <property type="entry name" value="DAP_deCOOHase_LysA"/>
</dbReference>
<dbReference type="InterPro" id="IPR022643">
    <property type="entry name" value="De-COase2_C"/>
</dbReference>
<dbReference type="InterPro" id="IPR022644">
    <property type="entry name" value="De-COase2_N"/>
</dbReference>
<dbReference type="InterPro" id="IPR000183">
    <property type="entry name" value="Orn/DAP/Arg_de-COase"/>
</dbReference>
<dbReference type="InterPro" id="IPR029066">
    <property type="entry name" value="PLP-binding_barrel"/>
</dbReference>
<dbReference type="NCBIfam" id="TIGR01048">
    <property type="entry name" value="lysA"/>
    <property type="match status" value="1"/>
</dbReference>
<dbReference type="PANTHER" id="PTHR43727">
    <property type="entry name" value="DIAMINOPIMELATE DECARBOXYLASE"/>
    <property type="match status" value="1"/>
</dbReference>
<dbReference type="PANTHER" id="PTHR43727:SF2">
    <property type="entry name" value="GROUP IV DECARBOXYLASE"/>
    <property type="match status" value="1"/>
</dbReference>
<dbReference type="Pfam" id="PF02784">
    <property type="entry name" value="Orn_Arg_deC_N"/>
    <property type="match status" value="1"/>
</dbReference>
<dbReference type="Pfam" id="PF00278">
    <property type="entry name" value="Orn_DAP_Arg_deC"/>
    <property type="match status" value="1"/>
</dbReference>
<dbReference type="PRINTS" id="PR01181">
    <property type="entry name" value="DAPDCRBXLASE"/>
</dbReference>
<dbReference type="PRINTS" id="PR01179">
    <property type="entry name" value="ODADCRBXLASE"/>
</dbReference>
<dbReference type="SUPFAM" id="SSF50621">
    <property type="entry name" value="Alanine racemase C-terminal domain-like"/>
    <property type="match status" value="1"/>
</dbReference>
<dbReference type="SUPFAM" id="SSF51419">
    <property type="entry name" value="PLP-binding barrel"/>
    <property type="match status" value="1"/>
</dbReference>
<proteinExistence type="inferred from homology"/>
<protein>
    <recommendedName>
        <fullName evidence="2">Diaminopimelate decarboxylase</fullName>
        <shortName evidence="2">DAP decarboxylase</shortName>
        <shortName evidence="2">DAPDC</shortName>
        <ecNumber evidence="2">4.1.1.20</ecNumber>
    </recommendedName>
</protein>
<comment type="function">
    <text evidence="2">Specifically catalyzes the decarboxylation of meso-diaminopimelate (meso-DAP) to L-lysine.</text>
</comment>
<comment type="catalytic activity">
    <reaction evidence="2">
        <text>meso-2,6-diaminopimelate + H(+) = L-lysine + CO2</text>
        <dbReference type="Rhea" id="RHEA:15101"/>
        <dbReference type="ChEBI" id="CHEBI:15378"/>
        <dbReference type="ChEBI" id="CHEBI:16526"/>
        <dbReference type="ChEBI" id="CHEBI:32551"/>
        <dbReference type="ChEBI" id="CHEBI:57791"/>
        <dbReference type="EC" id="4.1.1.20"/>
    </reaction>
</comment>
<comment type="cofactor">
    <cofactor evidence="2">
        <name>pyridoxal 5'-phosphate</name>
        <dbReference type="ChEBI" id="CHEBI:597326"/>
    </cofactor>
</comment>
<comment type="pathway">
    <text evidence="2">Amino-acid biosynthesis; L-lysine biosynthesis via DAP pathway; L-lysine from DL-2,6-diaminopimelate: step 1/1.</text>
</comment>
<comment type="subunit">
    <text evidence="2">Homodimer.</text>
</comment>
<comment type="similarity">
    <text evidence="2">Belongs to the Orn/Lys/Arg decarboxylase class-II family. LysA subfamily.</text>
</comment>
<gene>
    <name evidence="2" type="primary">lysA</name>
    <name type="ordered locus">bbp_388</name>
</gene>
<sequence length="418" mass="47916">MSGLLKKKQRFSCNDILKIVSKYGTPLWVYDSNIIVKKIKELSQFDVIRFAQKSCSNIHILNLFYKYNVKIDAVSLGEIERALISKYRFTMDQDVVFTSDIIERETLNKVVQYKIPINIGSIDMLEQVGKISPGHNIWLRINPKFGHGHSKKTNTGGENSKHGIWDINLAFPYITKYNFKLIGLHMHIGSGVDYCHLKRVCKAMIDQVLQCKFKIHVISAGGGLTVPYHCNDEPVNVKNYFFLWNKARKIISNYLNRPIRLEIEPGRFLVAESGILVSEIRVIKKTNNRTFILVDSGFNDLIRPAMYGSYHHISVIPRDGRCVNYDDTIEAVVCGPLCESGDVFTQNEYGDIKTRILPNVQIGDFLVFHDTGAYGASMSSNYNSRPLIPEILFKDNEFHIIRRRQTMKELLELEINCI</sequence>
<feature type="chain" id="PRO_0000149918" description="Diaminopimelate decarboxylase">
    <location>
        <begin position="1"/>
        <end position="418"/>
    </location>
</feature>
<feature type="active site" description="Proton donor" evidence="1">
    <location>
        <position position="338"/>
    </location>
</feature>
<feature type="binding site" evidence="2">
    <location>
        <position position="223"/>
    </location>
    <ligand>
        <name>pyridoxal 5'-phosphate</name>
        <dbReference type="ChEBI" id="CHEBI:597326"/>
    </ligand>
</feature>
<feature type="binding site" evidence="2">
    <location>
        <begin position="264"/>
        <end position="267"/>
    </location>
    <ligand>
        <name>pyridoxal 5'-phosphate</name>
        <dbReference type="ChEBI" id="CHEBI:597326"/>
    </ligand>
</feature>
<feature type="binding site" evidence="2">
    <location>
        <position position="267"/>
    </location>
    <ligand>
        <name>substrate</name>
    </ligand>
</feature>
<feature type="binding site" evidence="2">
    <location>
        <position position="303"/>
    </location>
    <ligand>
        <name>substrate</name>
    </ligand>
</feature>
<feature type="binding site" evidence="2">
    <location>
        <position position="307"/>
    </location>
    <ligand>
        <name>substrate</name>
    </ligand>
</feature>
<feature type="binding site" evidence="2">
    <location>
        <position position="339"/>
    </location>
    <ligand>
        <name>substrate</name>
    </ligand>
</feature>
<feature type="binding site" evidence="2">
    <location>
        <position position="374"/>
    </location>
    <ligand>
        <name>pyridoxal 5'-phosphate</name>
        <dbReference type="ChEBI" id="CHEBI:597326"/>
    </ligand>
</feature>
<feature type="binding site" evidence="2">
    <location>
        <position position="374"/>
    </location>
    <ligand>
        <name>substrate</name>
    </ligand>
</feature>
<feature type="modified residue" description="N6-(pyridoxal phosphate)lysine" evidence="2">
    <location>
        <position position="53"/>
    </location>
</feature>
<reference key="1">
    <citation type="journal article" date="2003" name="Proc. Natl. Acad. Sci. U.S.A.">
        <title>Reductive genome evolution in Buchnera aphidicola.</title>
        <authorList>
            <person name="van Ham R.C.H.J."/>
            <person name="Kamerbeek J."/>
            <person name="Palacios C."/>
            <person name="Rausell C."/>
            <person name="Abascal F."/>
            <person name="Bastolla U."/>
            <person name="Fernandez J.M."/>
            <person name="Jimenez L."/>
            <person name="Postigo M."/>
            <person name="Silva F.J."/>
            <person name="Tamames J."/>
            <person name="Viguera E."/>
            <person name="Latorre A."/>
            <person name="Valencia A."/>
            <person name="Moran F."/>
            <person name="Moya A."/>
        </authorList>
    </citation>
    <scope>NUCLEOTIDE SEQUENCE [LARGE SCALE GENOMIC DNA]</scope>
    <source>
        <strain>Bp</strain>
    </source>
</reference>